<accession>Q1C3Z1</accession>
<proteinExistence type="inferred from homology"/>
<protein>
    <recommendedName>
        <fullName evidence="1">Sulfite reductase [NADPH] hemoprotein beta-component</fullName>
        <shortName evidence="1">SiR-HP</shortName>
        <shortName evidence="1">SiRHP</shortName>
        <ecNumber evidence="1">1.8.1.2</ecNumber>
    </recommendedName>
</protein>
<keyword id="KW-0004">4Fe-4S</keyword>
<keyword id="KW-0028">Amino-acid biosynthesis</keyword>
<keyword id="KW-0198">Cysteine biosynthesis</keyword>
<keyword id="KW-0349">Heme</keyword>
<keyword id="KW-0408">Iron</keyword>
<keyword id="KW-0411">Iron-sulfur</keyword>
<keyword id="KW-0479">Metal-binding</keyword>
<keyword id="KW-0521">NADP</keyword>
<keyword id="KW-0560">Oxidoreductase</keyword>
<feature type="chain" id="PRO_1000068782" description="Sulfite reductase [NADPH] hemoprotein beta-component">
    <location>
        <begin position="1"/>
        <end position="576"/>
    </location>
</feature>
<feature type="binding site" evidence="1">
    <location>
        <position position="435"/>
    </location>
    <ligand>
        <name>[4Fe-4S] cluster</name>
        <dbReference type="ChEBI" id="CHEBI:49883"/>
    </ligand>
</feature>
<feature type="binding site" evidence="1">
    <location>
        <position position="441"/>
    </location>
    <ligand>
        <name>[4Fe-4S] cluster</name>
        <dbReference type="ChEBI" id="CHEBI:49883"/>
    </ligand>
</feature>
<feature type="binding site" evidence="1">
    <location>
        <position position="480"/>
    </location>
    <ligand>
        <name>[4Fe-4S] cluster</name>
        <dbReference type="ChEBI" id="CHEBI:49883"/>
    </ligand>
</feature>
<feature type="binding site" evidence="1">
    <location>
        <position position="484"/>
    </location>
    <ligand>
        <name>[4Fe-4S] cluster</name>
        <dbReference type="ChEBI" id="CHEBI:49883"/>
    </ligand>
</feature>
<feature type="binding site" description="axial binding residue" evidence="1">
    <location>
        <position position="484"/>
    </location>
    <ligand>
        <name>siroheme</name>
        <dbReference type="ChEBI" id="CHEBI:60052"/>
    </ligand>
    <ligandPart>
        <name>Fe</name>
        <dbReference type="ChEBI" id="CHEBI:18248"/>
    </ligandPart>
</feature>
<organism>
    <name type="scientific">Yersinia pestis bv. Antiqua (strain Antiqua)</name>
    <dbReference type="NCBI Taxonomy" id="360102"/>
    <lineage>
        <taxon>Bacteria</taxon>
        <taxon>Pseudomonadati</taxon>
        <taxon>Pseudomonadota</taxon>
        <taxon>Gammaproteobacteria</taxon>
        <taxon>Enterobacterales</taxon>
        <taxon>Yersiniaceae</taxon>
        <taxon>Yersinia</taxon>
    </lineage>
</organism>
<reference key="1">
    <citation type="journal article" date="2006" name="J. Bacteriol.">
        <title>Complete genome sequence of Yersinia pestis strains Antiqua and Nepal516: evidence of gene reduction in an emerging pathogen.</title>
        <authorList>
            <person name="Chain P.S.G."/>
            <person name="Hu P."/>
            <person name="Malfatti S.A."/>
            <person name="Radnedge L."/>
            <person name="Larimer F."/>
            <person name="Vergez L.M."/>
            <person name="Worsham P."/>
            <person name="Chu M.C."/>
            <person name="Andersen G.L."/>
        </authorList>
    </citation>
    <scope>NUCLEOTIDE SEQUENCE [LARGE SCALE GENOMIC DNA]</scope>
    <source>
        <strain>Antiqua</strain>
    </source>
</reference>
<dbReference type="EC" id="1.8.1.2" evidence="1"/>
<dbReference type="EMBL" id="CP000308">
    <property type="protein sequence ID" value="ABG14831.1"/>
    <property type="molecule type" value="Genomic_DNA"/>
</dbReference>
<dbReference type="RefSeq" id="WP_002209382.1">
    <property type="nucleotide sequence ID" value="NZ_CP009906.1"/>
</dbReference>
<dbReference type="SMR" id="Q1C3Z1"/>
<dbReference type="GeneID" id="57975337"/>
<dbReference type="KEGG" id="ypa:YPA_2869"/>
<dbReference type="UniPathway" id="UPA00140">
    <property type="reaction ID" value="UER00207"/>
</dbReference>
<dbReference type="Proteomes" id="UP000001971">
    <property type="component" value="Chromosome"/>
</dbReference>
<dbReference type="GO" id="GO:0009337">
    <property type="term" value="C:sulfite reductase complex (NADPH)"/>
    <property type="evidence" value="ECO:0007669"/>
    <property type="project" value="InterPro"/>
</dbReference>
<dbReference type="GO" id="GO:0051539">
    <property type="term" value="F:4 iron, 4 sulfur cluster binding"/>
    <property type="evidence" value="ECO:0007669"/>
    <property type="project" value="UniProtKB-KW"/>
</dbReference>
<dbReference type="GO" id="GO:0020037">
    <property type="term" value="F:heme binding"/>
    <property type="evidence" value="ECO:0007669"/>
    <property type="project" value="InterPro"/>
</dbReference>
<dbReference type="GO" id="GO:0046872">
    <property type="term" value="F:metal ion binding"/>
    <property type="evidence" value="ECO:0007669"/>
    <property type="project" value="UniProtKB-KW"/>
</dbReference>
<dbReference type="GO" id="GO:0050661">
    <property type="term" value="F:NADP binding"/>
    <property type="evidence" value="ECO:0007669"/>
    <property type="project" value="InterPro"/>
</dbReference>
<dbReference type="GO" id="GO:0050311">
    <property type="term" value="F:sulfite reductase (ferredoxin) activity"/>
    <property type="evidence" value="ECO:0007669"/>
    <property type="project" value="TreeGrafter"/>
</dbReference>
<dbReference type="GO" id="GO:0004783">
    <property type="term" value="F:sulfite reductase (NADPH) activity"/>
    <property type="evidence" value="ECO:0007669"/>
    <property type="project" value="UniProtKB-UniRule"/>
</dbReference>
<dbReference type="GO" id="GO:0019344">
    <property type="term" value="P:cysteine biosynthetic process"/>
    <property type="evidence" value="ECO:0007669"/>
    <property type="project" value="UniProtKB-KW"/>
</dbReference>
<dbReference type="GO" id="GO:0070814">
    <property type="term" value="P:hydrogen sulfide biosynthetic process"/>
    <property type="evidence" value="ECO:0007669"/>
    <property type="project" value="UniProtKB-UniRule"/>
</dbReference>
<dbReference type="GO" id="GO:0000103">
    <property type="term" value="P:sulfate assimilation"/>
    <property type="evidence" value="ECO:0007669"/>
    <property type="project" value="UniProtKB-UniRule"/>
</dbReference>
<dbReference type="FunFam" id="3.30.413.10:FF:000003">
    <property type="entry name" value="Sulfite reductase [NADPH] hemoprotein beta-component"/>
    <property type="match status" value="1"/>
</dbReference>
<dbReference type="FunFam" id="3.30.413.10:FF:000004">
    <property type="entry name" value="Sulfite reductase [NADPH] hemoprotein beta-component"/>
    <property type="match status" value="1"/>
</dbReference>
<dbReference type="Gene3D" id="3.30.413.10">
    <property type="entry name" value="Sulfite Reductase Hemoprotein, domain 1"/>
    <property type="match status" value="2"/>
</dbReference>
<dbReference type="HAMAP" id="MF_01540">
    <property type="entry name" value="CysI"/>
    <property type="match status" value="1"/>
</dbReference>
<dbReference type="InterPro" id="IPR011786">
    <property type="entry name" value="CysI"/>
</dbReference>
<dbReference type="InterPro" id="IPR005117">
    <property type="entry name" value="NiRdtase/SiRdtase_haem-b_fer"/>
</dbReference>
<dbReference type="InterPro" id="IPR036136">
    <property type="entry name" value="Nit/Sulf_reduc_fer-like_dom_sf"/>
</dbReference>
<dbReference type="InterPro" id="IPR006067">
    <property type="entry name" value="NO2/SO3_Rdtase_4Fe4S_dom"/>
</dbReference>
<dbReference type="InterPro" id="IPR045169">
    <property type="entry name" value="NO2/SO3_Rdtase_4Fe4S_prot"/>
</dbReference>
<dbReference type="InterPro" id="IPR045854">
    <property type="entry name" value="NO2/SO3_Rdtase_4Fe4S_sf"/>
</dbReference>
<dbReference type="InterPro" id="IPR006066">
    <property type="entry name" value="NO2/SO3_Rdtase_FeS/sirohaem_BS"/>
</dbReference>
<dbReference type="NCBIfam" id="TIGR02041">
    <property type="entry name" value="CysI"/>
    <property type="match status" value="1"/>
</dbReference>
<dbReference type="NCBIfam" id="NF010029">
    <property type="entry name" value="PRK13504.1"/>
    <property type="match status" value="1"/>
</dbReference>
<dbReference type="PANTHER" id="PTHR11493:SF47">
    <property type="entry name" value="SULFITE REDUCTASE [NADPH] SUBUNIT BETA"/>
    <property type="match status" value="1"/>
</dbReference>
<dbReference type="PANTHER" id="PTHR11493">
    <property type="entry name" value="SULFITE REDUCTASE [NADPH] SUBUNIT BETA-RELATED"/>
    <property type="match status" value="1"/>
</dbReference>
<dbReference type="Pfam" id="PF01077">
    <property type="entry name" value="NIR_SIR"/>
    <property type="match status" value="1"/>
</dbReference>
<dbReference type="Pfam" id="PF03460">
    <property type="entry name" value="NIR_SIR_ferr"/>
    <property type="match status" value="2"/>
</dbReference>
<dbReference type="PRINTS" id="PR00397">
    <property type="entry name" value="SIROHAEM"/>
</dbReference>
<dbReference type="SUPFAM" id="SSF56014">
    <property type="entry name" value="Nitrite and sulphite reductase 4Fe-4S domain-like"/>
    <property type="match status" value="2"/>
</dbReference>
<dbReference type="SUPFAM" id="SSF55124">
    <property type="entry name" value="Nitrite/Sulfite reductase N-terminal domain-like"/>
    <property type="match status" value="2"/>
</dbReference>
<dbReference type="PROSITE" id="PS00365">
    <property type="entry name" value="NIR_SIR"/>
    <property type="match status" value="1"/>
</dbReference>
<evidence type="ECO:0000255" key="1">
    <source>
        <dbReference type="HAMAP-Rule" id="MF_01540"/>
    </source>
</evidence>
<gene>
    <name evidence="1" type="primary">cysI</name>
    <name type="ordered locus">YPA_2869</name>
</gene>
<name>CYSI_YERPA</name>
<sequence>MNEKHPGPLVVSGKLSDGERMKSESNFLRGTIAEDLNNGLTGGFSGDNFLLIRFHGMYQQDDRDIRAERAEQKLEPRHAMMLRCRLPGGIITPQQWLGIDKFAADNTLYGSIRITNRQTFQFHGILKGNVKPAHQLLNELGLDALATANDVNRNVLCTSNPVESALHQEAYEWAKKISEHLLPRTRAYAEIWLDAEKVATTDEEPILGATYLPRKFKTTVVIPPQNDVDLHANDLNFVAVADKGKLIGFNVLVGGGLSIAHGDKNTYPRKASEFGYIPLKHTLAIAEAVVTTQRDWGNRTDRKNAKTKYTLERVGVETFKAEVEKRAGVSFSAIKPYQFIGRGDRIGWVKGVDKKWHLTLFVENGRLLDYPGRSLKTGVAEIAKIHQGDFRLTANQNLIVAGVPEKDKARIEALAREHGLMDDNVTSQRENSMACVSFPTCPLAMAEAERFLPEFVTRVEGILQQHGLADEHIVLRVTGCPNGCGRALLAEVGLVGKAVGRYNLHLGGNREGTRIPRMYRENITADEILLITDQLVGRWAKERHVDEGFGDFVIRAGVIAPVIDSARDFYDVQEAM</sequence>
<comment type="function">
    <text evidence="1">Component of the sulfite reductase complex that catalyzes the 6-electron reduction of sulfite to sulfide. This is one of several activities required for the biosynthesis of L-cysteine from sulfate.</text>
</comment>
<comment type="catalytic activity">
    <reaction evidence="1">
        <text>hydrogen sulfide + 3 NADP(+) + 3 H2O = sulfite + 3 NADPH + 4 H(+)</text>
        <dbReference type="Rhea" id="RHEA:13801"/>
        <dbReference type="ChEBI" id="CHEBI:15377"/>
        <dbReference type="ChEBI" id="CHEBI:15378"/>
        <dbReference type="ChEBI" id="CHEBI:17359"/>
        <dbReference type="ChEBI" id="CHEBI:29919"/>
        <dbReference type="ChEBI" id="CHEBI:57783"/>
        <dbReference type="ChEBI" id="CHEBI:58349"/>
        <dbReference type="EC" id="1.8.1.2"/>
    </reaction>
</comment>
<comment type="cofactor">
    <cofactor evidence="1">
        <name>siroheme</name>
        <dbReference type="ChEBI" id="CHEBI:60052"/>
    </cofactor>
    <text evidence="1">Binds 1 siroheme per subunit.</text>
</comment>
<comment type="cofactor">
    <cofactor evidence="1">
        <name>[4Fe-4S] cluster</name>
        <dbReference type="ChEBI" id="CHEBI:49883"/>
    </cofactor>
    <text evidence="1">Binds 1 [4Fe-4S] cluster per subunit.</text>
</comment>
<comment type="pathway">
    <text evidence="1">Sulfur metabolism; hydrogen sulfide biosynthesis; hydrogen sulfide from sulfite (NADPH route): step 1/1.</text>
</comment>
<comment type="subunit">
    <text evidence="1">Alpha(8)-beta(8). The alpha component is a flavoprotein, the beta component is a hemoprotein.</text>
</comment>
<comment type="similarity">
    <text evidence="1">Belongs to the nitrite and sulfite reductase 4Fe-4S domain family.</text>
</comment>